<sequence>MEEQLYLDAEGPLLPLHTSISLFLMSYCDCKTWKIFLVLPDSKANNLSKNILLPRNLELETICKCDLPPLVRGCRLPAVVEASGAFCRAGLAVVLRHITHKAHIAEPSRNDIIELLGFKKTCLKACAEVSQWTRLCEISIPRAIESFLKKPSATIPTEVLQFEKKLGEPVKVHNDDKIRRQKLQQQMTANTNEAVDAKSNTAKTMPCFDIITNKTSLELGAALSKLTVQGALSRATREPSHIRKAKNSDLPPLEHVFAEGLYFTLTDVVLLPCIHAFLVALSNVAEEKCSELPLIAAWYKRVQQVPGVRFAASMCNITFLDILCENAKPQKMLSTFDSETEEKEIQDSNFVGGPRPTMTKLKELGIEAIFSSHPCPSWAIDWESLPAAASPAEGKMSSERAVRKQQQLNNLLSVVTNIAKPGDTIVDFCSGGGHVGIVLAHKLPSCQVILIENKEESLLRAKERCSELGLINIWFIQANLDYFTGSFTIGVALHACGVATDMVMDHCIKARAAFAISPCCYGFIQNTVKTSFPRSCRFQEALNYKEHMILCRFADQTAVQLPAERRQIGKQCMGLVDLDRAWAAEQNKYKVQVITMEPESCSPKNNMIVGSPI</sequence>
<organism>
    <name type="scientific">Xenopus laevis</name>
    <name type="common">African clawed frog</name>
    <dbReference type="NCBI Taxonomy" id="8355"/>
    <lineage>
        <taxon>Eukaryota</taxon>
        <taxon>Metazoa</taxon>
        <taxon>Chordata</taxon>
        <taxon>Craniata</taxon>
        <taxon>Vertebrata</taxon>
        <taxon>Euteleostomi</taxon>
        <taxon>Amphibia</taxon>
        <taxon>Batrachia</taxon>
        <taxon>Anura</taxon>
        <taxon>Pipoidea</taxon>
        <taxon>Pipidae</taxon>
        <taxon>Xenopodinae</taxon>
        <taxon>Xenopus</taxon>
        <taxon>Xenopus</taxon>
    </lineage>
</organism>
<evidence type="ECO:0000250" key="1">
    <source>
        <dbReference type="UniProtKB" id="Q8NEC7"/>
    </source>
</evidence>
<evidence type="ECO:0000305" key="2"/>
<gene>
    <name type="primary">gstcd</name>
</gene>
<comment type="subcellular location">
    <subcellularLocation>
        <location evidence="1">Cytoplasm</location>
    </subcellularLocation>
</comment>
<comment type="similarity">
    <text evidence="2">Belongs to the GSTCD family.</text>
</comment>
<proteinExistence type="evidence at transcript level"/>
<keyword id="KW-0963">Cytoplasm</keyword>
<keyword id="KW-1185">Reference proteome</keyword>
<dbReference type="EMBL" id="BC077432">
    <property type="protein sequence ID" value="AAH77432.1"/>
    <property type="molecule type" value="mRNA"/>
</dbReference>
<dbReference type="RefSeq" id="NP_001086778.1">
    <property type="nucleotide sequence ID" value="NM_001093309.1"/>
</dbReference>
<dbReference type="SMR" id="Q6DDT5"/>
<dbReference type="DNASU" id="446613"/>
<dbReference type="GeneID" id="446613"/>
<dbReference type="KEGG" id="xla:446613"/>
<dbReference type="AGR" id="Xenbase:XB-GENE-5873090"/>
<dbReference type="CTD" id="446613"/>
<dbReference type="Xenbase" id="XB-GENE-5873090">
    <property type="gene designation" value="gstcd.L"/>
</dbReference>
<dbReference type="OrthoDB" id="206598at2759"/>
<dbReference type="Proteomes" id="UP000186698">
    <property type="component" value="Chromosome 1L"/>
</dbReference>
<dbReference type="Bgee" id="446613">
    <property type="expression patterns" value="Expressed in egg cell and 19 other cell types or tissues"/>
</dbReference>
<dbReference type="GO" id="GO:0005737">
    <property type="term" value="C:cytoplasm"/>
    <property type="evidence" value="ECO:0000250"/>
    <property type="project" value="UniProtKB"/>
</dbReference>
<dbReference type="FunFam" id="3.40.50.150:FF:000125">
    <property type="entry name" value="Glutathione S-transferase C-terminal domain-containing protein"/>
    <property type="match status" value="1"/>
</dbReference>
<dbReference type="Gene3D" id="3.40.50.150">
    <property type="entry name" value="Vaccinia Virus protein VP39"/>
    <property type="match status" value="1"/>
</dbReference>
<dbReference type="InterPro" id="IPR036282">
    <property type="entry name" value="Glutathione-S-Trfase_C_sf"/>
</dbReference>
<dbReference type="InterPro" id="IPR025714">
    <property type="entry name" value="Methyltranfer_dom"/>
</dbReference>
<dbReference type="InterPro" id="IPR029063">
    <property type="entry name" value="SAM-dependent_MTases_sf"/>
</dbReference>
<dbReference type="PANTHER" id="PTHR13369">
    <property type="match status" value="1"/>
</dbReference>
<dbReference type="PANTHER" id="PTHR13369:SF0">
    <property type="entry name" value="GLUTATHIONE S-TRANSFERASE C-TERMINAL DOMAIN-CONTAINING PROTEIN"/>
    <property type="match status" value="1"/>
</dbReference>
<dbReference type="Pfam" id="PF13679">
    <property type="entry name" value="Methyltransf_32"/>
    <property type="match status" value="1"/>
</dbReference>
<dbReference type="SUPFAM" id="SSF47616">
    <property type="entry name" value="GST C-terminal domain-like"/>
    <property type="match status" value="1"/>
</dbReference>
<dbReference type="SUPFAM" id="SSF53335">
    <property type="entry name" value="S-adenosyl-L-methionine-dependent methyltransferases"/>
    <property type="match status" value="1"/>
</dbReference>
<name>GSTCD_XENLA</name>
<accession>Q6DDT5</accession>
<protein>
    <recommendedName>
        <fullName>Glutathione S-transferase C-terminal domain-containing protein</fullName>
    </recommendedName>
</protein>
<feature type="chain" id="PRO_0000316955" description="Glutathione S-transferase C-terminal domain-containing protein">
    <location>
        <begin position="1"/>
        <end position="613"/>
    </location>
</feature>
<feature type="domain" description="GST C-terminal">
    <location>
        <begin position="116"/>
        <end position="312"/>
    </location>
</feature>
<reference key="1">
    <citation type="submission" date="2004-07" db="EMBL/GenBank/DDBJ databases">
        <authorList>
            <consortium name="NIH - Xenopus Gene Collection (XGC) project"/>
        </authorList>
    </citation>
    <scope>NUCLEOTIDE SEQUENCE [LARGE SCALE MRNA]</scope>
    <source>
        <tissue>Kidney</tissue>
    </source>
</reference>